<proteinExistence type="inferred from homology"/>
<reference key="1">
    <citation type="submission" date="2005-11" db="EMBL/GenBank/DDBJ databases">
        <title>NISC comparative sequencing initiative.</title>
        <authorList>
            <person name="Antonellis A."/>
            <person name="Ayele K."/>
            <person name="Benjamin B."/>
            <person name="Blakesley R.W."/>
            <person name="Boakye A."/>
            <person name="Bouffard G.G."/>
            <person name="Brinkley C."/>
            <person name="Brooks S."/>
            <person name="Chu G."/>
            <person name="Coleman H."/>
            <person name="Engle J."/>
            <person name="Gestole M."/>
            <person name="Greene A."/>
            <person name="Guan X."/>
            <person name="Gupta J."/>
            <person name="Haghighi P."/>
            <person name="Han J."/>
            <person name="Hansen N."/>
            <person name="Ho S.-L."/>
            <person name="Hu P."/>
            <person name="Hunter G."/>
            <person name="Hurle B."/>
            <person name="Idol J.R."/>
            <person name="Kwong P."/>
            <person name="Laric P."/>
            <person name="Larson S."/>
            <person name="Lee-Lin S.-Q."/>
            <person name="Legaspi R."/>
            <person name="Madden M."/>
            <person name="Maduro Q.L."/>
            <person name="Maduro V.B."/>
            <person name="Margulies E.H."/>
            <person name="Masiello C."/>
            <person name="Maskeri B."/>
            <person name="McDowell J."/>
            <person name="Mojidi H.A."/>
            <person name="Mullikin J.C."/>
            <person name="Oestreicher J.S."/>
            <person name="Park M."/>
            <person name="Portnoy M.E."/>
            <person name="Prasad A."/>
            <person name="Puri O."/>
            <person name="Reddix-Dugue N."/>
            <person name="Schandler K."/>
            <person name="Schueler M.G."/>
            <person name="Sison C."/>
            <person name="Stantripop S."/>
            <person name="Stephen E."/>
            <person name="Taye A."/>
            <person name="Thomas J.W."/>
            <person name="Thomas P.J."/>
            <person name="Tsipouri V."/>
            <person name="Ung L."/>
            <person name="Vogt J.L."/>
            <person name="Wetherby K.D."/>
            <person name="Young A."/>
            <person name="Green E.D."/>
        </authorList>
    </citation>
    <scope>NUCLEOTIDE SEQUENCE [LARGE SCALE GENOMIC DNA]</scope>
</reference>
<protein>
    <recommendedName>
        <fullName>Hepatocyte growth factor receptor</fullName>
        <shortName>HGF receptor</shortName>
        <ecNumber>2.7.10.1</ecNumber>
    </recommendedName>
    <alternativeName>
        <fullName>HGF/SF receptor</fullName>
    </alternativeName>
    <alternativeName>
        <fullName>Proto-oncogene c-Met</fullName>
    </alternativeName>
    <alternativeName>
        <fullName>Scatter factor receptor</fullName>
        <shortName>SF receptor</shortName>
    </alternativeName>
    <alternativeName>
        <fullName>Tyrosine-protein kinase Met</fullName>
    </alternativeName>
</protein>
<evidence type="ECO:0000250" key="1"/>
<evidence type="ECO:0000250" key="2">
    <source>
        <dbReference type="UniProtKB" id="P08581"/>
    </source>
</evidence>
<evidence type="ECO:0000250" key="3">
    <source>
        <dbReference type="UniProtKB" id="P16056"/>
    </source>
</evidence>
<evidence type="ECO:0000255" key="4"/>
<evidence type="ECO:0000255" key="5">
    <source>
        <dbReference type="PROSITE-ProRule" id="PRU00159"/>
    </source>
</evidence>
<evidence type="ECO:0000255" key="6">
    <source>
        <dbReference type="PROSITE-ProRule" id="PRU00352"/>
    </source>
</evidence>
<evidence type="ECO:0000255" key="7">
    <source>
        <dbReference type="PROSITE-ProRule" id="PRU10028"/>
    </source>
</evidence>
<comment type="function">
    <text evidence="1">Receptor tyrosine kinase that transduces signals from the extracellular matrix into the cytoplasm by binding to hepatocyte growth factor/HGF ligand. Regulates many physiological processes including proliferation, scattering, morphogenesis and survival. Ligand binding at the cell surface induces autophosphorylation of MET on its intracellular domain that provides docking sites for downstream signaling molecules. Following activation by ligand, interacts with the PI3-kinase subunit PIK3R1, PLCG1, SRC, GRB2, STAT3 or the adapter GAB1. Recruitment of these downstream effectors by MET leads to the activation of several signaling cascades including the RAS-ERK, PI3 kinase-AKT, or PLCgamma-PKC. The RAS-ERK activation is associated with the morphogenetic effects while PI3K/AKT coordinates prosurvival effects. During embryonic development, MET signaling plays a role in gastrulation, development and migration of muscles and neuronal precursors, angiogenesis and kidney formation. In adults, participates in wound healing as well as organ regeneration and tissue remodeling. Also promotes differentiation and proliferation of hematopoietic cells (By similarity).</text>
</comment>
<comment type="catalytic activity">
    <reaction evidence="7">
        <text>L-tyrosyl-[protein] + ATP = O-phospho-L-tyrosyl-[protein] + ADP + H(+)</text>
        <dbReference type="Rhea" id="RHEA:10596"/>
        <dbReference type="Rhea" id="RHEA-COMP:10136"/>
        <dbReference type="Rhea" id="RHEA-COMP:20101"/>
        <dbReference type="ChEBI" id="CHEBI:15378"/>
        <dbReference type="ChEBI" id="CHEBI:30616"/>
        <dbReference type="ChEBI" id="CHEBI:46858"/>
        <dbReference type="ChEBI" id="CHEBI:61978"/>
        <dbReference type="ChEBI" id="CHEBI:456216"/>
        <dbReference type="EC" id="2.7.10.1"/>
    </reaction>
</comment>
<comment type="activity regulation">
    <text evidence="1">In its inactive state, the C-terminal tail interacts with the catalytic domain and inhibits the kinase activity. Upon ligand binding, the C-terminal tail is displaced and becomes phosphorylated, thus increasing the kinase activity (By similarity).</text>
</comment>
<comment type="subunit">
    <text evidence="2 3">Heterodimer made of an alpha chain (50 kDa) and a beta chain (145 kDa) which are disulfide linked. Binds PLXNB1. Interacts when phosphorylated with downstream effectors including STAT3, PIK3R1, SRC, PCLG1, GRB2 and GAB1. Interacts with SPSB1, SPSB2 and SPSB4. Interacts with INPP5D/SHIP1. When phosphorylated at Tyr-1357, interacts with INPPL1/SHIP2. Interacts with RANBP9 and RANBP10, as well as SPSB1, SPSB2, SPSB3 and SPSB4. SPSB1 binding occurs in the presence and in the absence of HGF, however HGF treatment has a positive effect on this interaction. Interacts with MUC20; prevents interaction with GRB2 and suppresses hepatocyte growth factor-induced cell proliferation. Interacts with GRB10. Interacts with PTPN1 and PTPN2. Interacts with HSP90AA1 and HSP90AB1; the interaction suppresses MET kinase activity. Interacts with tensin TNS3 (By similarity). Interacts (when phosphorylated) with tensin TNS4 (via SH2 domain); the interaction increases MET protein stability by inhibiting MET endocytosis and subsequent lysosomal degradation (By similarity).</text>
</comment>
<comment type="subcellular location">
    <subcellularLocation>
        <location evidence="1">Membrane</location>
        <topology evidence="1">Single-pass type I membrane protein</topology>
    </subcellularLocation>
</comment>
<comment type="domain">
    <text evidence="1">The kinase domain is involved in SPSB1 binding.</text>
</comment>
<comment type="domain">
    <text evidence="1">The beta-propeller Sema domain mediates binding to HGF.</text>
</comment>
<comment type="PTM">
    <text evidence="2">Autophosphorylated in response to ligand binding on Tyr-1235 and Tyr-1236 in the kinase domain leading to further phosphorylation of Tyr-1350 and Tyr-1357 in the C-terminal multifunctional docking site. Dephosphorylated by PTPRJ at Tyr-1350 and Tyr-1366. Dephosphorylated by PTPN1 and PTPN2 (By similarity).</text>
</comment>
<comment type="PTM">
    <text evidence="2">Ubiquitinated. Ubiquitination by CBL regulates the receptor stability and activity through proteasomal degradation (By similarity).</text>
</comment>
<comment type="PTM">
    <text evidence="2">O-mannosylation of IPT/TIG domains by TMEM260 is required for protein maturation. O-mannosylated residues are composed of single mannose glycans that are not elongated or modified.</text>
</comment>
<comment type="similarity">
    <text evidence="5">Belongs to the protein kinase superfamily. Tyr protein kinase family.</text>
</comment>
<gene>
    <name type="primary">MET</name>
</gene>
<keyword id="KW-0067">ATP-binding</keyword>
<keyword id="KW-1015">Disulfide bond</keyword>
<keyword id="KW-0325">Glycoprotein</keyword>
<keyword id="KW-0418">Kinase</keyword>
<keyword id="KW-0472">Membrane</keyword>
<keyword id="KW-0547">Nucleotide-binding</keyword>
<keyword id="KW-0597">Phosphoprotein</keyword>
<keyword id="KW-0656">Proto-oncogene</keyword>
<keyword id="KW-0675">Receptor</keyword>
<keyword id="KW-0677">Repeat</keyword>
<keyword id="KW-0732">Signal</keyword>
<keyword id="KW-0808">Transferase</keyword>
<keyword id="KW-0812">Transmembrane</keyword>
<keyword id="KW-1133">Transmembrane helix</keyword>
<keyword id="KW-0829">Tyrosine-protein kinase</keyword>
<keyword id="KW-0832">Ubl conjugation</keyword>
<feature type="signal peptide" evidence="4">
    <location>
        <begin position="1"/>
        <end position="24"/>
    </location>
</feature>
<feature type="chain" id="PRO_0000260422" description="Hepatocyte growth factor receptor">
    <location>
        <begin position="25"/>
        <end position="1382"/>
    </location>
</feature>
<feature type="topological domain" description="Extracellular" evidence="4">
    <location>
        <begin position="25"/>
        <end position="933"/>
    </location>
</feature>
<feature type="transmembrane region" description="Helical" evidence="4">
    <location>
        <begin position="934"/>
        <end position="956"/>
    </location>
</feature>
<feature type="topological domain" description="Cytoplasmic" evidence="4">
    <location>
        <begin position="957"/>
        <end position="1382"/>
    </location>
</feature>
<feature type="domain" description="Sema" evidence="6">
    <location>
        <begin position="27"/>
        <end position="516"/>
    </location>
</feature>
<feature type="domain" description="IPT/TIG 1">
    <location>
        <begin position="564"/>
        <end position="656"/>
    </location>
</feature>
<feature type="domain" description="IPT/TIG 2">
    <location>
        <begin position="658"/>
        <end position="740"/>
    </location>
</feature>
<feature type="domain" description="IPT/TIG 3">
    <location>
        <begin position="743"/>
        <end position="837"/>
    </location>
</feature>
<feature type="domain" description="Protein kinase" evidence="5">
    <location>
        <begin position="1079"/>
        <end position="1346"/>
    </location>
</feature>
<feature type="region of interest" description="Interaction with RANBP9" evidence="1">
    <location>
        <begin position="1213"/>
        <end position="1382"/>
    </location>
</feature>
<feature type="region of interest" description="Interaction with MUC20" evidence="1">
    <location>
        <begin position="1321"/>
        <end position="1360"/>
    </location>
</feature>
<feature type="active site" description="Proton acceptor" evidence="5 7">
    <location>
        <position position="1205"/>
    </location>
</feature>
<feature type="binding site" evidence="5">
    <location>
        <begin position="1085"/>
        <end position="1093"/>
    </location>
    <ligand>
        <name>ATP</name>
        <dbReference type="ChEBI" id="CHEBI:30616"/>
    </ligand>
</feature>
<feature type="binding site" evidence="5">
    <location>
        <position position="1111"/>
    </location>
    <ligand>
        <name>ATP</name>
        <dbReference type="ChEBI" id="CHEBI:30616"/>
    </ligand>
</feature>
<feature type="site" description="Cleavage" evidence="4">
    <location>
        <begin position="308"/>
        <end position="309"/>
    </location>
</feature>
<feature type="modified residue" description="Phosphoserine" evidence="2">
    <location>
        <position position="967"/>
    </location>
</feature>
<feature type="modified residue" description="Phosphothreonine" evidence="2">
    <location>
        <position position="978"/>
    </location>
</feature>
<feature type="modified residue" description="Phosphoserine" evidence="2">
    <location>
        <position position="991"/>
    </location>
</feature>
<feature type="modified residue" description="Phosphoserine" evidence="2">
    <location>
        <position position="998"/>
    </location>
</feature>
<feature type="modified residue" description="Phosphoserine" evidence="2">
    <location>
        <position position="1001"/>
    </location>
</feature>
<feature type="modified residue" description="Phosphotyrosine" evidence="2">
    <location>
        <position position="1004"/>
    </location>
</feature>
<feature type="modified residue" description="Phosphotyrosine" evidence="2">
    <location>
        <position position="1231"/>
    </location>
</feature>
<feature type="modified residue" description="Phosphotyrosine; by autocatalysis" evidence="2">
    <location>
        <position position="1235"/>
    </location>
</feature>
<feature type="modified residue" description="Phosphotyrosine; by autocatalysis" evidence="2">
    <location>
        <position position="1236"/>
    </location>
</feature>
<feature type="modified residue" description="Phosphothreonine" evidence="2">
    <location>
        <position position="1290"/>
    </location>
</feature>
<feature type="modified residue" description="Phosphotyrosine; by autocatalysis" evidence="2">
    <location>
        <position position="1350"/>
    </location>
</feature>
<feature type="modified residue" description="Phosphotyrosine; by autocatalysis" evidence="2">
    <location>
        <position position="1357"/>
    </location>
</feature>
<feature type="modified residue" description="Phosphotyrosine" evidence="2">
    <location>
        <position position="1366"/>
    </location>
</feature>
<feature type="glycosylation site" description="N-linked (GlcNAc...) asparagine" evidence="4">
    <location>
        <position position="45"/>
    </location>
</feature>
<feature type="glycosylation site" description="N-linked (GlcNAc...) asparagine" evidence="4">
    <location>
        <position position="100"/>
    </location>
</feature>
<feature type="glycosylation site" description="N-linked (GlcNAc...) asparagine" evidence="4">
    <location>
        <position position="106"/>
    </location>
</feature>
<feature type="glycosylation site" description="N-linked (GlcNAc...) asparagine" evidence="4">
    <location>
        <position position="203"/>
    </location>
</feature>
<feature type="glycosylation site" description="N-linked (GlcNAc...) asparagine" evidence="4">
    <location>
        <position position="359"/>
    </location>
</feature>
<feature type="glycosylation site" description="N-linked (GlcNAc...) asparagine" evidence="4">
    <location>
        <position position="400"/>
    </location>
</feature>
<feature type="glycosylation site" description="N-linked (GlcNAc...) asparagine" evidence="4">
    <location>
        <position position="406"/>
    </location>
</feature>
<feature type="glycosylation site" description="O-linked (Man) threonine" evidence="2">
    <location>
        <position position="583"/>
    </location>
</feature>
<feature type="glycosylation site" description="N-linked (GlcNAc...) asparagine" evidence="4">
    <location>
        <position position="608"/>
    </location>
</feature>
<feature type="glycosylation site" description="N-linked (GlcNAc...) asparagine" evidence="4">
    <location>
        <position position="636"/>
    </location>
</feature>
<feature type="glycosylation site" description="O-linked (Man) threonine" evidence="2">
    <location>
        <position position="677"/>
    </location>
</feature>
<feature type="glycosylation site" description="O-linked (Man) threonine" evidence="2">
    <location>
        <position position="762"/>
    </location>
</feature>
<feature type="glycosylation site" description="N-linked (GlcNAc...) asparagine" evidence="4">
    <location>
        <position position="786"/>
    </location>
</feature>
<feature type="glycosylation site" description="N-linked (GlcNAc...) asparagine" evidence="4">
    <location>
        <position position="880"/>
    </location>
</feature>
<feature type="glycosylation site" description="N-linked (GlcNAc...) asparagine" evidence="4">
    <location>
        <position position="931"/>
    </location>
</feature>
<feature type="disulfide bond" evidence="6">
    <location>
        <begin position="95"/>
        <end position="101"/>
    </location>
</feature>
<feature type="disulfide bond" evidence="6">
    <location>
        <begin position="98"/>
        <end position="160"/>
    </location>
</feature>
<feature type="disulfide bond" evidence="6">
    <location>
        <begin position="133"/>
        <end position="141"/>
    </location>
</feature>
<feature type="disulfide bond" evidence="6">
    <location>
        <begin position="173"/>
        <end position="176"/>
    </location>
</feature>
<feature type="disulfide bond" evidence="6">
    <location>
        <begin position="299"/>
        <end position="364"/>
    </location>
</feature>
<feature type="disulfide bond" evidence="6">
    <location>
        <begin position="386"/>
        <end position="398"/>
    </location>
</feature>
<feature type="disulfide bond" evidence="6">
    <location>
        <begin position="521"/>
        <end position="539"/>
    </location>
</feature>
<feature type="disulfide bond" evidence="6">
    <location>
        <begin position="527"/>
        <end position="562"/>
    </location>
</feature>
<feature type="disulfide bond" evidence="6">
    <location>
        <begin position="530"/>
        <end position="546"/>
    </location>
</feature>
<feature type="disulfide bond" evidence="6">
    <location>
        <begin position="542"/>
        <end position="552"/>
    </location>
</feature>
<accession>Q2IBG7</accession>
<sequence>MKASAVLAPGILALLFTLVQGNDGECQEALAKSEMNVNMKYQLPNFTAETPIQNVVLHEHHIYLGATNYIYVLNDKDLQKVSEYKTGPVLEHPECFPCQNCSNNANLSSGIWKDNINMALLVDRYYDDQLISCGSVNRGACQRHILPPDNPADIQSKVHCMFSPQADEEPSQCPDCVVSALGAKVLLSEKDRFINFFVGNTINSSYFPDHPLHSISVRRLKETQDGFKFLTDQSYIDVLPEFRDSYPIKYVHAFESNHFIYFLTVQKETLDAQTFHTRIIRFCSVDSGLHSYMEMPLECILTEKRRKRSTREEVFNILQAAYVSKPGAQLAKQIGASLNDDILFGVFAQSKPDSAEPMNRSAVCAFPIKYVNEFFNKIVNKNNVRCLQHFYGPHHEHCFNRTLLRNSSGCEVRRDEYRTEFTTAFQRVDLFMGQFNQVLLTSISTFIKGDLTIANLGTSEGRFMQVVVSRSGSSTPHVNFQLDSHPVSPEVIVEHPLNQNGYTLVVTGKKITKIPLNGLGCGHFQSCSQCLFAPSFVQCGWCHDKCVRSEECPSGIWTQEICLPAIHKVFPTSAPLEGGTMLTICGWDFGFRRNNKFDLKKTRVLLGNESCTLTLSESTTNMLKCTVGPAMNEHFNMSIIISHGRGTAQYSTFSYVDPVITSISPSYGPKAGGTLLTLTGKYLNSGNSRHISIGGKTCTLKSVSNSILECYTPAQIISTEFPVKLKIDLANRETSSFSYREDPIVHEIHPTKSFVSGGSTITGVGKNLNSVSVPRMVINVQEAGRNFTVACQHRSNSEIICCTTPSLQQLNLRLPLKTKAFFMLDGILSKYFDLIYVHNPVFKPFEKPVMISMGNENVLEIKGNDIDPEAVKGEVLKVGNKSCENIHSHSEAVLCTVPNDLLKLNSELNIEWKQAVSSTVLGKVIVQPDQNFTGLIVGVVSISIILLLLLGLFLWMKKRKQIKDLGSELVRYDARVHTPHLDRLVSARSVSPTTEMVSNESVDYRATFPEDQFPNSSQNGSCRQVQYPLTDLSPILTSGDSDISSPLLQNTVHIDLSALNPELVQAVQHVVIGPSSLIVHFNEVIGRGHFGCVYHGTLLDNDGKKIHCAVKSLNRITDIGEVSQFLTEGIIMKDFSHPNVLSLLGICLRSEGSPLVVLPYMKHGDLRNFIRNETHNPTVKDLIGFGLQVAKGMKYLASKKFVHRDLAARNCMLDEKFTVKVADFGLARDMYDKEYYSVHNKTGAKLPVKWMALESLQTQKFTTKSDVWSFGVLLWELMTRGAPPYPDVNTFDITVYLLQGRRLLQPEYCPDPLYEVMLKCWHPKAEMRPSFSELVSRISAIFSTFIGEHYVHVNATYVNVKCVAPYPSLLSSQDNVNGEVDT</sequence>
<name>MET_EULMM</name>
<organism>
    <name type="scientific">Eulemur macaco macaco</name>
    <name type="common">Black lemur</name>
    <dbReference type="NCBI Taxonomy" id="30603"/>
    <lineage>
        <taxon>Eukaryota</taxon>
        <taxon>Metazoa</taxon>
        <taxon>Chordata</taxon>
        <taxon>Craniata</taxon>
        <taxon>Vertebrata</taxon>
        <taxon>Euteleostomi</taxon>
        <taxon>Mammalia</taxon>
        <taxon>Eutheria</taxon>
        <taxon>Euarchontoglires</taxon>
        <taxon>Primates</taxon>
        <taxon>Strepsirrhini</taxon>
        <taxon>Lemuriformes</taxon>
        <taxon>Lemuridae</taxon>
        <taxon>Eulemur</taxon>
    </lineage>
</organism>
<dbReference type="EC" id="2.7.10.1"/>
<dbReference type="EMBL" id="DP000024">
    <property type="protein sequence ID" value="ABC87435.1"/>
    <property type="molecule type" value="Genomic_DNA"/>
</dbReference>
<dbReference type="SMR" id="Q2IBG7"/>
<dbReference type="GlyCosmos" id="Q2IBG7">
    <property type="glycosylation" value="12 sites, No reported glycans"/>
</dbReference>
<dbReference type="GO" id="GO:0005886">
    <property type="term" value="C:plasma membrane"/>
    <property type="evidence" value="ECO:0007669"/>
    <property type="project" value="TreeGrafter"/>
</dbReference>
<dbReference type="GO" id="GO:0002116">
    <property type="term" value="C:semaphorin receptor complex"/>
    <property type="evidence" value="ECO:0007669"/>
    <property type="project" value="TreeGrafter"/>
</dbReference>
<dbReference type="GO" id="GO:0005524">
    <property type="term" value="F:ATP binding"/>
    <property type="evidence" value="ECO:0007669"/>
    <property type="project" value="UniProtKB-KW"/>
</dbReference>
<dbReference type="GO" id="GO:0017154">
    <property type="term" value="F:semaphorin receptor activity"/>
    <property type="evidence" value="ECO:0007669"/>
    <property type="project" value="InterPro"/>
</dbReference>
<dbReference type="GO" id="GO:0004714">
    <property type="term" value="F:transmembrane receptor protein tyrosine kinase activity"/>
    <property type="evidence" value="ECO:0007669"/>
    <property type="project" value="UniProtKB-EC"/>
</dbReference>
<dbReference type="GO" id="GO:0007169">
    <property type="term" value="P:cell surface receptor protein tyrosine kinase signaling pathway"/>
    <property type="evidence" value="ECO:0007669"/>
    <property type="project" value="InterPro"/>
</dbReference>
<dbReference type="GO" id="GO:0050918">
    <property type="term" value="P:positive chemotaxis"/>
    <property type="evidence" value="ECO:0000250"/>
    <property type="project" value="UniProtKB"/>
</dbReference>
<dbReference type="GO" id="GO:2001028">
    <property type="term" value="P:positive regulation of endothelial cell chemotaxis"/>
    <property type="evidence" value="ECO:0000250"/>
    <property type="project" value="UniProtKB"/>
</dbReference>
<dbReference type="GO" id="GO:0071526">
    <property type="term" value="P:semaphorin-plexin signaling pathway"/>
    <property type="evidence" value="ECO:0000250"/>
    <property type="project" value="UniProtKB"/>
</dbReference>
<dbReference type="CDD" id="cd00603">
    <property type="entry name" value="IPT_PCSR"/>
    <property type="match status" value="1"/>
</dbReference>
<dbReference type="CDD" id="cd01180">
    <property type="entry name" value="IPT_plexin_repeat1"/>
    <property type="match status" value="1"/>
</dbReference>
<dbReference type="CDD" id="cd01179">
    <property type="entry name" value="IPT_plexin_repeat2"/>
    <property type="match status" value="1"/>
</dbReference>
<dbReference type="CDD" id="cd01181">
    <property type="entry name" value="IPT_plexin_repeat3"/>
    <property type="match status" value="1"/>
</dbReference>
<dbReference type="CDD" id="cd05058">
    <property type="entry name" value="PTKc_Met_Ron"/>
    <property type="match status" value="1"/>
</dbReference>
<dbReference type="CDD" id="cd11278">
    <property type="entry name" value="Sema_MET"/>
    <property type="match status" value="1"/>
</dbReference>
<dbReference type="FunFam" id="1.10.510.10:FF:000093">
    <property type="entry name" value="Hepatocyte growth factor receptor"/>
    <property type="match status" value="1"/>
</dbReference>
<dbReference type="FunFam" id="2.130.10.10:FF:000088">
    <property type="entry name" value="Hepatocyte growth factor receptor"/>
    <property type="match status" value="1"/>
</dbReference>
<dbReference type="FunFam" id="2.60.40.10:FF:000213">
    <property type="entry name" value="Hepatocyte growth factor receptor"/>
    <property type="match status" value="1"/>
</dbReference>
<dbReference type="FunFam" id="2.60.40.10:FF:000400">
    <property type="entry name" value="Hepatocyte growth factor receptor"/>
    <property type="match status" value="1"/>
</dbReference>
<dbReference type="FunFam" id="2.60.40.10:FF:002708">
    <property type="entry name" value="Hepatocyte growth factor receptor"/>
    <property type="match status" value="1"/>
</dbReference>
<dbReference type="FunFam" id="3.30.200.20:FF:000188">
    <property type="entry name" value="Hepatocyte growth factor receptor"/>
    <property type="match status" value="1"/>
</dbReference>
<dbReference type="FunFam" id="3.30.1680.10:FF:000006">
    <property type="entry name" value="Macrophage-stimulating 1 receptor b"/>
    <property type="match status" value="1"/>
</dbReference>
<dbReference type="Gene3D" id="2.60.40.10">
    <property type="entry name" value="Immunoglobulins"/>
    <property type="match status" value="3"/>
</dbReference>
<dbReference type="Gene3D" id="3.30.200.20">
    <property type="entry name" value="Phosphorylase Kinase, domain 1"/>
    <property type="match status" value="1"/>
</dbReference>
<dbReference type="Gene3D" id="1.10.510.10">
    <property type="entry name" value="Transferase(Phosphotransferase) domain 1"/>
    <property type="match status" value="1"/>
</dbReference>
<dbReference type="Gene3D" id="2.130.10.10">
    <property type="entry name" value="YVTN repeat-like/Quinoprotein amine dehydrogenase"/>
    <property type="match status" value="1"/>
</dbReference>
<dbReference type="InterPro" id="IPR013783">
    <property type="entry name" value="Ig-like_fold"/>
</dbReference>
<dbReference type="InterPro" id="IPR014756">
    <property type="entry name" value="Ig_E-set"/>
</dbReference>
<dbReference type="InterPro" id="IPR002909">
    <property type="entry name" value="IPT_dom"/>
</dbReference>
<dbReference type="InterPro" id="IPR011009">
    <property type="entry name" value="Kinase-like_dom_sf"/>
</dbReference>
<dbReference type="InterPro" id="IPR031148">
    <property type="entry name" value="Plexin"/>
</dbReference>
<dbReference type="InterPro" id="IPR002165">
    <property type="entry name" value="Plexin_repeat"/>
</dbReference>
<dbReference type="InterPro" id="IPR000719">
    <property type="entry name" value="Prot_kinase_dom"/>
</dbReference>
<dbReference type="InterPro" id="IPR017441">
    <property type="entry name" value="Protein_kinase_ATP_BS"/>
</dbReference>
<dbReference type="InterPro" id="IPR016201">
    <property type="entry name" value="PSI"/>
</dbReference>
<dbReference type="InterPro" id="IPR001627">
    <property type="entry name" value="Semap_dom"/>
</dbReference>
<dbReference type="InterPro" id="IPR036352">
    <property type="entry name" value="Semap_dom_sf"/>
</dbReference>
<dbReference type="InterPro" id="IPR001245">
    <property type="entry name" value="Ser-Thr/Tyr_kinase_cat_dom"/>
</dbReference>
<dbReference type="InterPro" id="IPR008266">
    <property type="entry name" value="Tyr_kinase_AS"/>
</dbReference>
<dbReference type="InterPro" id="IPR020635">
    <property type="entry name" value="Tyr_kinase_cat_dom"/>
</dbReference>
<dbReference type="InterPro" id="IPR016244">
    <property type="entry name" value="Tyr_kinase_HGF/MSP_rcpt"/>
</dbReference>
<dbReference type="InterPro" id="IPR015943">
    <property type="entry name" value="WD40/YVTN_repeat-like_dom_sf"/>
</dbReference>
<dbReference type="PANTHER" id="PTHR22625:SF61">
    <property type="entry name" value="HEPATOCYTE GROWTH FACTOR RECEPTOR"/>
    <property type="match status" value="1"/>
</dbReference>
<dbReference type="PANTHER" id="PTHR22625">
    <property type="entry name" value="PLEXIN"/>
    <property type="match status" value="1"/>
</dbReference>
<dbReference type="Pfam" id="PF07714">
    <property type="entry name" value="PK_Tyr_Ser-Thr"/>
    <property type="match status" value="1"/>
</dbReference>
<dbReference type="Pfam" id="PF01437">
    <property type="entry name" value="PSI"/>
    <property type="match status" value="1"/>
</dbReference>
<dbReference type="Pfam" id="PF01403">
    <property type="entry name" value="Sema"/>
    <property type="match status" value="1"/>
</dbReference>
<dbReference type="Pfam" id="PF01833">
    <property type="entry name" value="TIG"/>
    <property type="match status" value="3"/>
</dbReference>
<dbReference type="PIRSF" id="PIRSF000617">
    <property type="entry name" value="TyrPK_HGF-R"/>
    <property type="match status" value="1"/>
</dbReference>
<dbReference type="PRINTS" id="PR00109">
    <property type="entry name" value="TYRKINASE"/>
</dbReference>
<dbReference type="SMART" id="SM00429">
    <property type="entry name" value="IPT"/>
    <property type="match status" value="4"/>
</dbReference>
<dbReference type="SMART" id="SM00423">
    <property type="entry name" value="PSI"/>
    <property type="match status" value="1"/>
</dbReference>
<dbReference type="SMART" id="SM00630">
    <property type="entry name" value="Sema"/>
    <property type="match status" value="1"/>
</dbReference>
<dbReference type="SMART" id="SM00219">
    <property type="entry name" value="TyrKc"/>
    <property type="match status" value="1"/>
</dbReference>
<dbReference type="SUPFAM" id="SSF81296">
    <property type="entry name" value="E set domains"/>
    <property type="match status" value="3"/>
</dbReference>
<dbReference type="SUPFAM" id="SSF103575">
    <property type="entry name" value="Plexin repeat"/>
    <property type="match status" value="1"/>
</dbReference>
<dbReference type="SUPFAM" id="SSF56112">
    <property type="entry name" value="Protein kinase-like (PK-like)"/>
    <property type="match status" value="1"/>
</dbReference>
<dbReference type="SUPFAM" id="SSF101912">
    <property type="entry name" value="Sema domain"/>
    <property type="match status" value="1"/>
</dbReference>
<dbReference type="PROSITE" id="PS00107">
    <property type="entry name" value="PROTEIN_KINASE_ATP"/>
    <property type="match status" value="1"/>
</dbReference>
<dbReference type="PROSITE" id="PS50011">
    <property type="entry name" value="PROTEIN_KINASE_DOM"/>
    <property type="match status" value="1"/>
</dbReference>
<dbReference type="PROSITE" id="PS00109">
    <property type="entry name" value="PROTEIN_KINASE_TYR"/>
    <property type="match status" value="1"/>
</dbReference>
<dbReference type="PROSITE" id="PS51004">
    <property type="entry name" value="SEMA"/>
    <property type="match status" value="1"/>
</dbReference>